<reference key="1">
    <citation type="journal article" date="1998" name="J. Infect. Dis.">
        <title>Studies of the role for NSP4 in the pathogenesis of homologous murine rotavirus diarrhea.</title>
        <authorList>
            <person name="Angel J."/>
            <person name="Tang B."/>
            <person name="Feng N."/>
            <person name="Greenberg H.B."/>
            <person name="Bass D."/>
        </authorList>
    </citation>
    <scope>NUCLEOTIDE SEQUENCE [MRNA]</scope>
</reference>
<comment type="function">
    <text evidence="1">Plays an essential role in the virus replication cycle by acting as a viroporin. Creates a pore in the host endoplasmic reticulum and as a consequence releases Ca(2+) in the cytoplasm of infected cell. In turn, high levels of cytoplasmic calcium trigger membrane trafficking and transport of viral ER-associated proteins to viroplasms, sites of viral genome replication and immature particle assembly.</text>
</comment>
<comment type="function">
    <text evidence="1">The secreted form acts as an enterotoxin that causes phospholipase C-dependent elevation of the intracellular calcium concentration in host intestinal mucosa cells. Increased concentration of intracellular calcium disrupts the cytoskeleton and the tight junctions, raising the paracellular permeability. Potentiates chloride ion secretion through a calcium ion-dependent signaling pathway, inducing age-dependent diarrhea. To perform this enterotoxigenic role in vivo, NSP4 is released from infected enterocytes in a soluble form capable of diffusing within the intestinal lumen and interacting with host plasma membrane receptors on neighboring epithelial cells such as integrins ITGA1/ITGB1 and ITGA2/ITGB1.</text>
</comment>
<comment type="subunit">
    <text evidence="1">Homotetramer. Interacts with the immature particle in the viroplasm. Interacts with host CAV1, early and late in infection. Interacts with host integrin ITGA1/ITGB1 heterodimer. Interacts with host integrin ITGA2/ITGB1 heterodimer. Interaction with microtubules blocks trafficking to the Golgi apparatus.</text>
</comment>
<comment type="subcellular location">
    <subcellularLocation>
        <location evidence="1">Host rough endoplasmic reticulum membrane</location>
        <topology evidence="1">Single-pass type III membrane protein</topology>
    </subcellularLocation>
    <subcellularLocation>
        <location evidence="1">Host membrane</location>
        <location evidence="1">Host caveola</location>
        <topology evidence="1">Single-pass type III membrane protein</topology>
    </subcellularLocation>
    <subcellularLocation>
        <location evidence="1">Secreted</location>
    </subcellularLocation>
    <text evidence="1">NSP4 also localizes in vesicular structures which contain autophagosomal markers and associate with viroplasms in virus-infected cells. Additionally, a soluble form of glycosylated NSP4 is secreted despite retention of its transmembrane domain.</text>
</comment>
<comment type="domain">
    <text evidence="1">Binds 1 calcium ion per tetramer.</text>
</comment>
<comment type="PTM">
    <text evidence="1">The N-glycosyl content is primarily Man(9)GlcNAc, with a small amount of Man(8)GlcNAc.</text>
</comment>
<comment type="similarity">
    <text evidence="1">Belongs to the rotavirus NSP4 family.</text>
</comment>
<protein>
    <recommendedName>
        <fullName evidence="1">Non-structural glycoprotein 4</fullName>
        <shortName evidence="1">NSP4</shortName>
    </recommendedName>
    <alternativeName>
        <fullName evidence="1">NCVP5</fullName>
    </alternativeName>
    <alternativeName>
        <fullName evidence="1">NS28</fullName>
    </alternativeName>
</protein>
<proteinExistence type="evidence at transcript level"/>
<organism>
    <name type="scientific">Rotavirus A (isolate RVA/Mouse/Brazil/EHP/1981/G16P[20])</name>
    <name type="common">RV-A</name>
    <dbReference type="NCBI Taxonomy" id="578840"/>
    <lineage>
        <taxon>Viruses</taxon>
        <taxon>Riboviria</taxon>
        <taxon>Orthornavirae</taxon>
        <taxon>Duplornaviricota</taxon>
        <taxon>Resentoviricetes</taxon>
        <taxon>Reovirales</taxon>
        <taxon>Sedoreoviridae</taxon>
        <taxon>Rotavirus</taxon>
        <taxon>Rotavirus A</taxon>
    </lineage>
</organism>
<keyword id="KW-1072">Activation of host autophagy by virus</keyword>
<keyword id="KW-0106">Calcium</keyword>
<keyword id="KW-0260">Enterotoxin</keyword>
<keyword id="KW-0325">Glycoprotein</keyword>
<keyword id="KW-1038">Host endoplasmic reticulum</keyword>
<keyword id="KW-1043">Host membrane</keyword>
<keyword id="KW-0945">Host-virus interaction</keyword>
<keyword id="KW-0407">Ion channel</keyword>
<keyword id="KW-0406">Ion transport</keyword>
<keyword id="KW-0472">Membrane</keyword>
<keyword id="KW-0479">Metal-binding</keyword>
<keyword id="KW-0964">Secreted</keyword>
<keyword id="KW-0735">Signal-anchor</keyword>
<keyword id="KW-0800">Toxin</keyword>
<keyword id="KW-0812">Transmembrane</keyword>
<keyword id="KW-1133">Transmembrane helix</keyword>
<keyword id="KW-0813">Transport</keyword>
<keyword id="KW-1182">Viral ion channel</keyword>
<keyword id="KW-0843">Virulence</keyword>
<accession>O11982</accession>
<dbReference type="EMBL" id="U96336">
    <property type="protein sequence ID" value="AAB58699.1"/>
    <property type="molecule type" value="mRNA"/>
</dbReference>
<dbReference type="SMR" id="O11982"/>
<dbReference type="GO" id="GO:0005576">
    <property type="term" value="C:extracellular region"/>
    <property type="evidence" value="ECO:0007669"/>
    <property type="project" value="UniProtKB-SubCell"/>
</dbReference>
<dbReference type="GO" id="GO:0044155">
    <property type="term" value="C:host caveola"/>
    <property type="evidence" value="ECO:0007669"/>
    <property type="project" value="UniProtKB-SubCell"/>
</dbReference>
<dbReference type="GO" id="GO:0044169">
    <property type="term" value="C:host cell rough endoplasmic reticulum membrane"/>
    <property type="evidence" value="ECO:0007669"/>
    <property type="project" value="UniProtKB-SubCell"/>
</dbReference>
<dbReference type="GO" id="GO:0016020">
    <property type="term" value="C:membrane"/>
    <property type="evidence" value="ECO:0007669"/>
    <property type="project" value="UniProtKB-UniRule"/>
</dbReference>
<dbReference type="GO" id="GO:0015267">
    <property type="term" value="F:channel activity"/>
    <property type="evidence" value="ECO:0007669"/>
    <property type="project" value="UniProtKB-KW"/>
</dbReference>
<dbReference type="GO" id="GO:0046872">
    <property type="term" value="F:metal ion binding"/>
    <property type="evidence" value="ECO:0007669"/>
    <property type="project" value="UniProtKB-UniRule"/>
</dbReference>
<dbReference type="GO" id="GO:0090729">
    <property type="term" value="F:toxin activity"/>
    <property type="evidence" value="ECO:0007669"/>
    <property type="project" value="UniProtKB-UniRule"/>
</dbReference>
<dbReference type="GO" id="GO:0034220">
    <property type="term" value="P:monoatomic ion transmembrane transport"/>
    <property type="evidence" value="ECO:0007669"/>
    <property type="project" value="UniProtKB-KW"/>
</dbReference>
<dbReference type="GO" id="GO:0039520">
    <property type="term" value="P:symbiont-mediated activation of host autophagy"/>
    <property type="evidence" value="ECO:0007669"/>
    <property type="project" value="UniProtKB-KW"/>
</dbReference>
<dbReference type="GO" id="GO:0016032">
    <property type="term" value="P:viral process"/>
    <property type="evidence" value="ECO:0007669"/>
    <property type="project" value="UniProtKB-UniRule"/>
</dbReference>
<dbReference type="Gene3D" id="1.20.5.430">
    <property type="match status" value="1"/>
</dbReference>
<dbReference type="HAMAP" id="MF_04091">
    <property type="entry name" value="ROTA_NSP4"/>
    <property type="match status" value="1"/>
</dbReference>
<dbReference type="InterPro" id="IPR002107">
    <property type="entry name" value="Rotavirus_NSP4"/>
</dbReference>
<dbReference type="Pfam" id="PF01452">
    <property type="entry name" value="Rota_NSP4"/>
    <property type="match status" value="1"/>
</dbReference>
<dbReference type="SUPFAM" id="SSF58030">
    <property type="entry name" value="Rotavirus nonstructural proteins"/>
    <property type="match status" value="1"/>
</dbReference>
<evidence type="ECO:0000255" key="1">
    <source>
        <dbReference type="HAMAP-Rule" id="MF_04091"/>
    </source>
</evidence>
<sequence>MEKLADLNYTLGVITLLNDTLHNILEEPGMVYFPYVASALTVLFTMHKASLPAMKLAMRTSQCSYRIIKRVVVTLINTLLRLGGYNDYLTDKDETEKQINRVVKELRQQLTMIEKLTTREIEQVELLKRIYDMMVVRHDREIDMSKETNQKAFNTLHDWGNDRNYDDNTDVIAPL</sequence>
<name>NSP4_ROTME</name>
<feature type="chain" id="PRO_0000369471" description="Non-structural glycoprotein 4">
    <location>
        <begin position="1"/>
        <end position="175"/>
    </location>
</feature>
<feature type="topological domain" description="Lumenal" evidence="1">
    <location>
        <begin position="1"/>
        <end position="28"/>
    </location>
</feature>
<feature type="transmembrane region" description="Helical; Signal-anchor for type III membrane protein" evidence="1">
    <location>
        <begin position="29"/>
        <end position="51"/>
    </location>
</feature>
<feature type="topological domain" description="Cytoplasmic" evidence="1">
    <location>
        <begin position="52"/>
        <end position="175"/>
    </location>
</feature>
<feature type="binding site" evidence="1">
    <location>
        <position position="120"/>
    </location>
    <ligand>
        <name>Ca(2+)</name>
        <dbReference type="ChEBI" id="CHEBI:29108"/>
    </ligand>
</feature>
<feature type="binding site" evidence="1">
    <location>
        <position position="123"/>
    </location>
    <ligand>
        <name>Ca(2+)</name>
        <dbReference type="ChEBI" id="CHEBI:29108"/>
    </ligand>
</feature>
<feature type="glycosylation site" description="N-linked (GlcNAc...) asparagine; by host" evidence="1">
    <location>
        <position position="8"/>
    </location>
</feature>
<feature type="glycosylation site" description="N-linked (GlcNAc...) asparagine; by host" evidence="1">
    <location>
        <position position="18"/>
    </location>
</feature>
<organismHost>
    <name type="scientific">Mus musculus musculus</name>
    <name type="common">eastern European house mouse</name>
    <dbReference type="NCBI Taxonomy" id="39442"/>
</organismHost>